<dbReference type="EMBL" id="EF508371">
    <property type="protein sequence ID" value="ABO70780.1"/>
    <property type="molecule type" value="Genomic_DNA"/>
</dbReference>
<dbReference type="RefSeq" id="YP_001293596.1">
    <property type="nucleotide sequence ID" value="NC_009573.1"/>
</dbReference>
<dbReference type="SMR" id="A6MW17"/>
<dbReference type="GeneID" id="5228655"/>
<dbReference type="GO" id="GO:0009507">
    <property type="term" value="C:chloroplast"/>
    <property type="evidence" value="ECO:0007669"/>
    <property type="project" value="UniProtKB-SubCell"/>
</dbReference>
<dbReference type="GO" id="GO:0015935">
    <property type="term" value="C:small ribosomal subunit"/>
    <property type="evidence" value="ECO:0007669"/>
    <property type="project" value="InterPro"/>
</dbReference>
<dbReference type="GO" id="GO:0019843">
    <property type="term" value="F:rRNA binding"/>
    <property type="evidence" value="ECO:0007669"/>
    <property type="project" value="UniProtKB-UniRule"/>
</dbReference>
<dbReference type="GO" id="GO:0003735">
    <property type="term" value="F:structural constituent of ribosome"/>
    <property type="evidence" value="ECO:0007669"/>
    <property type="project" value="InterPro"/>
</dbReference>
<dbReference type="GO" id="GO:0006412">
    <property type="term" value="P:translation"/>
    <property type="evidence" value="ECO:0007669"/>
    <property type="project" value="UniProtKB-UniRule"/>
</dbReference>
<dbReference type="FunFam" id="3.30.230.10:FF:000002">
    <property type="entry name" value="30S ribosomal protein S5"/>
    <property type="match status" value="1"/>
</dbReference>
<dbReference type="Gene3D" id="3.30.160.20">
    <property type="match status" value="1"/>
</dbReference>
<dbReference type="Gene3D" id="3.30.230.10">
    <property type="match status" value="1"/>
</dbReference>
<dbReference type="HAMAP" id="MF_01307_B">
    <property type="entry name" value="Ribosomal_uS5_B"/>
    <property type="match status" value="1"/>
</dbReference>
<dbReference type="InterPro" id="IPR020568">
    <property type="entry name" value="Ribosomal_Su5_D2-typ_SF"/>
</dbReference>
<dbReference type="InterPro" id="IPR000851">
    <property type="entry name" value="Ribosomal_uS5"/>
</dbReference>
<dbReference type="InterPro" id="IPR005712">
    <property type="entry name" value="Ribosomal_uS5_bac-type"/>
</dbReference>
<dbReference type="InterPro" id="IPR005324">
    <property type="entry name" value="Ribosomal_uS5_C"/>
</dbReference>
<dbReference type="InterPro" id="IPR013810">
    <property type="entry name" value="Ribosomal_uS5_N"/>
</dbReference>
<dbReference type="InterPro" id="IPR018192">
    <property type="entry name" value="Ribosomal_uS5_N_CS"/>
</dbReference>
<dbReference type="InterPro" id="IPR014721">
    <property type="entry name" value="Ribsml_uS5_D2-typ_fold_subgr"/>
</dbReference>
<dbReference type="NCBIfam" id="TIGR01021">
    <property type="entry name" value="rpsE_bact"/>
    <property type="match status" value="1"/>
</dbReference>
<dbReference type="PANTHER" id="PTHR48277">
    <property type="entry name" value="MITOCHONDRIAL RIBOSOMAL PROTEIN S5"/>
    <property type="match status" value="1"/>
</dbReference>
<dbReference type="PANTHER" id="PTHR48277:SF1">
    <property type="entry name" value="MITOCHONDRIAL RIBOSOMAL PROTEIN S5"/>
    <property type="match status" value="1"/>
</dbReference>
<dbReference type="Pfam" id="PF00333">
    <property type="entry name" value="Ribosomal_S5"/>
    <property type="match status" value="1"/>
</dbReference>
<dbReference type="Pfam" id="PF03719">
    <property type="entry name" value="Ribosomal_S5_C"/>
    <property type="match status" value="1"/>
</dbReference>
<dbReference type="SUPFAM" id="SSF54768">
    <property type="entry name" value="dsRNA-binding domain-like"/>
    <property type="match status" value="1"/>
</dbReference>
<dbReference type="SUPFAM" id="SSF54211">
    <property type="entry name" value="Ribosomal protein S5 domain 2-like"/>
    <property type="match status" value="1"/>
</dbReference>
<dbReference type="PROSITE" id="PS00585">
    <property type="entry name" value="RIBOSOMAL_S5"/>
    <property type="match status" value="1"/>
</dbReference>
<dbReference type="PROSITE" id="PS50881">
    <property type="entry name" value="S5_DSRBD"/>
    <property type="match status" value="1"/>
</dbReference>
<reference key="1">
    <citation type="journal article" date="2007" name="Mol. Biol. Evol.">
        <title>Plastid genome sequence of the cryptophyte alga Rhodomonas salina CCMP1319: lateral transfer of putative DNA replication machinery and a test of chromist plastid phylogeny.</title>
        <authorList>
            <person name="Khan H."/>
            <person name="Parks N."/>
            <person name="Kozera C."/>
            <person name="Curtis B.A."/>
            <person name="Parsons B.J."/>
            <person name="Bowman S."/>
            <person name="Archibald J.M."/>
        </authorList>
    </citation>
    <scope>NUCLEOTIDE SEQUENCE [LARGE SCALE GENOMIC DNA]</scope>
    <source>
        <strain>CCMP1319 / NEPCC76 / CS-174</strain>
    </source>
</reference>
<evidence type="ECO:0000250" key="1"/>
<evidence type="ECO:0000305" key="2"/>
<feature type="chain" id="PRO_0000323236" description="Small ribosomal subunit protein uS5c">
    <location>
        <begin position="1"/>
        <end position="168"/>
    </location>
</feature>
<feature type="domain" description="S5 DRBM">
    <location>
        <begin position="17"/>
        <end position="80"/>
    </location>
</feature>
<accession>A6MW17</accession>
<organism>
    <name type="scientific">Rhodomonas salina</name>
    <name type="common">Cryptomonas salina</name>
    <dbReference type="NCBI Taxonomy" id="52970"/>
    <lineage>
        <taxon>Eukaryota</taxon>
        <taxon>Cryptophyceae</taxon>
        <taxon>Pyrenomonadales</taxon>
        <taxon>Pyrenomonadaceae</taxon>
        <taxon>Rhodomonas</taxon>
    </lineage>
</organism>
<keyword id="KW-0150">Chloroplast</keyword>
<keyword id="KW-0934">Plastid</keyword>
<keyword id="KW-0687">Ribonucleoprotein</keyword>
<keyword id="KW-0689">Ribosomal protein</keyword>
<keyword id="KW-0694">RNA-binding</keyword>
<keyword id="KW-0699">rRNA-binding</keyword>
<name>RR5_RHDSA</name>
<comment type="function">
    <text evidence="1">With S4 and S12 plays an important role in translational accuracy.</text>
</comment>
<comment type="subunit">
    <text evidence="1">Part of the 30S ribosomal subunit. Contacts protein S4 (By similarity).</text>
</comment>
<comment type="subcellular location">
    <subcellularLocation>
        <location>Plastid</location>
        <location>Chloroplast</location>
    </subcellularLocation>
</comment>
<comment type="domain">
    <text>The N-terminal domain interacts with the head of the 30S subunit; the C-terminal domain interacts with the body and contacts protein S4. The interaction surface between S4 and S5 is involved in control of translational fidelity.</text>
</comment>
<comment type="similarity">
    <text evidence="2">Belongs to the universal ribosomal protein uS5 family.</text>
</comment>
<proteinExistence type="inferred from homology"/>
<gene>
    <name type="primary">rps5</name>
</gene>
<sequence>MSNRRKSNKLKEKETDWQERVVQIRRVTKVVKGGKKLSFRAILIIGNEKGEVGVGVGKASDVIGAVKKAVSDGKKKIVSVPITKDSSIPHIVKGRSGAAKVIMRPSAPGSGVIAGGSVRTILELAGVKNILAKQLGSNNPLNNARAATDALLKLKTFSQVAQDRGITS</sequence>
<geneLocation type="chloroplast"/>
<protein>
    <recommendedName>
        <fullName evidence="2">Small ribosomal subunit protein uS5c</fullName>
    </recommendedName>
    <alternativeName>
        <fullName>30S ribosomal protein S5, chloroplastic</fullName>
    </alternativeName>
</protein>